<reference key="1">
    <citation type="journal article" date="1993" name="Arch. Biochem. Biophys.">
        <title>Kallidin-releasing enzyme from Bitis arietans (puff adder) venom.</title>
        <authorList>
            <person name="Nikai T."/>
            <person name="Momose M."/>
            <person name="Okumura Y."/>
            <person name="Ohara A."/>
            <person name="Komori Y."/>
            <person name="Sugihara H."/>
        </authorList>
    </citation>
    <scope>PROTEIN SEQUENCE</scope>
    <scope>FUNCTION</scope>
    <scope>BIOPHYSICOCHEMICAL PROPERTIES</scope>
    <scope>SUBCELLULAR LOCATION</scope>
    <scope>GLYCOSYLATION</scope>
    <source>
        <tissue>Venom</tissue>
    </source>
</reference>
<comment type="function">
    <text evidence="3">Cleaves a kininogen analog with the release of kallidin (lysyl-bradykinin). Completely cleaves fibrinogen Aalpha chain, partially cleaves Bbeta chain and has no activity on gamma chain.</text>
</comment>
<comment type="biophysicochemical properties">
    <kinetics>
        <KM evidence="3">6.3 mM for tosyl-L-arginine methyl ester</KM>
    </kinetics>
</comment>
<comment type="subunit">
    <text evidence="1">Monomer.</text>
</comment>
<comment type="subcellular location">
    <subcellularLocation>
        <location evidence="3">Secreted</location>
    </subcellularLocation>
</comment>
<comment type="tissue specificity">
    <text>Expressed by the venom gland.</text>
</comment>
<comment type="PTM">
    <text evidence="1">Contains 6 disulfide bonds.</text>
</comment>
<comment type="PTM">
    <text evidence="3">Glycosylated.</text>
</comment>
<comment type="miscellaneous">
    <text>The molecular weight was determined to be 58 kDa with an isoelectric point of 4.4.</text>
</comment>
<comment type="similarity">
    <text evidence="2">Belongs to the peptidase S1 family. Snake venom subfamily.</text>
</comment>
<keyword id="KW-0903">Direct protein sequencing</keyword>
<keyword id="KW-1015">Disulfide bond</keyword>
<keyword id="KW-1206">Fibrinogenolytic toxin</keyword>
<keyword id="KW-0325">Glycoprotein</keyword>
<keyword id="KW-1199">Hemostasis impairing toxin</keyword>
<keyword id="KW-0378">Hydrolase</keyword>
<keyword id="KW-0645">Protease</keyword>
<keyword id="KW-0964">Secreted</keyword>
<keyword id="KW-0720">Serine protease</keyword>
<keyword id="KW-0800">Toxin</keyword>
<name>VSP_BITAR</name>
<dbReference type="EC" id="3.4.21.-"/>
<dbReference type="PIR" id="S39785">
    <property type="entry name" value="S39785"/>
</dbReference>
<dbReference type="SABIO-RK" id="Q9PRY9"/>
<dbReference type="GO" id="GO:0005576">
    <property type="term" value="C:extracellular region"/>
    <property type="evidence" value="ECO:0007669"/>
    <property type="project" value="UniProtKB-SubCell"/>
</dbReference>
<dbReference type="GO" id="GO:0008236">
    <property type="term" value="F:serine-type peptidase activity"/>
    <property type="evidence" value="ECO:0007669"/>
    <property type="project" value="UniProtKB-KW"/>
</dbReference>
<dbReference type="GO" id="GO:0090729">
    <property type="term" value="F:toxin activity"/>
    <property type="evidence" value="ECO:0007669"/>
    <property type="project" value="UniProtKB-KW"/>
</dbReference>
<dbReference type="GO" id="GO:0006508">
    <property type="term" value="P:proteolysis"/>
    <property type="evidence" value="ECO:0007669"/>
    <property type="project" value="UniProtKB-KW"/>
</dbReference>
<dbReference type="Gene3D" id="2.40.10.10">
    <property type="entry name" value="Trypsin-like serine proteases"/>
    <property type="match status" value="1"/>
</dbReference>
<dbReference type="InterPro" id="IPR009003">
    <property type="entry name" value="Peptidase_S1_PA"/>
</dbReference>
<dbReference type="InterPro" id="IPR043504">
    <property type="entry name" value="Peptidase_S1_PA_chymotrypsin"/>
</dbReference>
<dbReference type="SUPFAM" id="SSF50494">
    <property type="entry name" value="Trypsin-like serine proteases"/>
    <property type="match status" value="1"/>
</dbReference>
<proteinExistence type="evidence at protein level"/>
<protein>
    <recommendedName>
        <fullName>Snake venom serine proteinase</fullName>
        <shortName>SVSP</shortName>
    </recommendedName>
    <alternativeName>
        <fullName>Kallidin-releasing enzyme</fullName>
        <ecNumber>3.4.21.-</ecNumber>
    </alternativeName>
</protein>
<sequence>VIGGDECDINEHRFLVFLTXASGLACGGTLIN</sequence>
<accession>Q9PRY9</accession>
<evidence type="ECO:0000250" key="1"/>
<evidence type="ECO:0000255" key="2">
    <source>
        <dbReference type="PROSITE-ProRule" id="PRU00274"/>
    </source>
</evidence>
<evidence type="ECO:0000269" key="3">
    <source>
    </source>
</evidence>
<feature type="chain" id="PRO_0000408028" description="Snake venom serine proteinase">
    <location>
        <begin position="1"/>
        <end position="32" status="greater than"/>
    </location>
</feature>
<feature type="domain" description="Peptidase S1" evidence="2">
    <location>
        <begin position="1"/>
        <end position="32" status="greater than"/>
    </location>
</feature>
<feature type="unsure residue" description="Assigned by comparison with orthologs">
    <location>
        <position position="7"/>
    </location>
</feature>
<feature type="unsure residue" description="Assigned by comparison with orthologs">
    <location>
        <position position="26"/>
    </location>
</feature>
<feature type="unsure residue" description="Assigned by comparison with orthologs">
    <location>
        <position position="29"/>
    </location>
</feature>
<feature type="non-terminal residue">
    <location>
        <position position="32"/>
    </location>
</feature>
<organism>
    <name type="scientific">Bitis arietans</name>
    <name type="common">African puff adder</name>
    <dbReference type="NCBI Taxonomy" id="8692"/>
    <lineage>
        <taxon>Eukaryota</taxon>
        <taxon>Metazoa</taxon>
        <taxon>Chordata</taxon>
        <taxon>Craniata</taxon>
        <taxon>Vertebrata</taxon>
        <taxon>Euteleostomi</taxon>
        <taxon>Lepidosauria</taxon>
        <taxon>Squamata</taxon>
        <taxon>Bifurcata</taxon>
        <taxon>Unidentata</taxon>
        <taxon>Episquamata</taxon>
        <taxon>Toxicofera</taxon>
        <taxon>Serpentes</taxon>
        <taxon>Colubroidea</taxon>
        <taxon>Viperidae</taxon>
        <taxon>Viperinae</taxon>
        <taxon>Bitis</taxon>
    </lineage>
</organism>